<evidence type="ECO:0000255" key="1">
    <source>
        <dbReference type="HAMAP-Rule" id="MF_01701"/>
    </source>
</evidence>
<gene>
    <name evidence="1" type="primary">cysA2</name>
    <name type="ordered locus">CV_1856</name>
</gene>
<organism>
    <name type="scientific">Chromobacterium violaceum (strain ATCC 12472 / DSM 30191 / JCM 1249 / CCUG 213 / NBRC 12614 / NCIMB 9131 / NCTC 9757 / MK)</name>
    <dbReference type="NCBI Taxonomy" id="243365"/>
    <lineage>
        <taxon>Bacteria</taxon>
        <taxon>Pseudomonadati</taxon>
        <taxon>Pseudomonadota</taxon>
        <taxon>Betaproteobacteria</taxon>
        <taxon>Neisseriales</taxon>
        <taxon>Chromobacteriaceae</taxon>
        <taxon>Chromobacterium</taxon>
    </lineage>
</organism>
<comment type="function">
    <text evidence="1">Part of the ABC transporter complex CysAWTP involved in sulfate/thiosulfate import. Responsible for energy coupling to the transport system.</text>
</comment>
<comment type="catalytic activity">
    <reaction evidence="1">
        <text>sulfate(out) + ATP + H2O = sulfate(in) + ADP + phosphate + H(+)</text>
        <dbReference type="Rhea" id="RHEA:10192"/>
        <dbReference type="ChEBI" id="CHEBI:15377"/>
        <dbReference type="ChEBI" id="CHEBI:15378"/>
        <dbReference type="ChEBI" id="CHEBI:16189"/>
        <dbReference type="ChEBI" id="CHEBI:30616"/>
        <dbReference type="ChEBI" id="CHEBI:43474"/>
        <dbReference type="ChEBI" id="CHEBI:456216"/>
        <dbReference type="EC" id="7.3.2.3"/>
    </reaction>
</comment>
<comment type="catalytic activity">
    <reaction evidence="1">
        <text>thiosulfate(out) + ATP + H2O = thiosulfate(in) + ADP + phosphate + H(+)</text>
        <dbReference type="Rhea" id="RHEA:29871"/>
        <dbReference type="ChEBI" id="CHEBI:15377"/>
        <dbReference type="ChEBI" id="CHEBI:15378"/>
        <dbReference type="ChEBI" id="CHEBI:30616"/>
        <dbReference type="ChEBI" id="CHEBI:33542"/>
        <dbReference type="ChEBI" id="CHEBI:43474"/>
        <dbReference type="ChEBI" id="CHEBI:456216"/>
        <dbReference type="EC" id="7.3.2.3"/>
    </reaction>
</comment>
<comment type="subunit">
    <text evidence="1">The complex is composed of two ATP-binding proteins (CysA), two transmembrane proteins (CysT and CysW) and a solute-binding protein (CysP).</text>
</comment>
<comment type="subcellular location">
    <subcellularLocation>
        <location evidence="1">Cell inner membrane</location>
        <topology evidence="1">Peripheral membrane protein</topology>
    </subcellularLocation>
</comment>
<comment type="similarity">
    <text evidence="1">Belongs to the ABC transporter superfamily. Sulfate/tungstate importer (TC 3.A.1.6) family.</text>
</comment>
<feature type="chain" id="PRO_0000092264" description="Sulfate/thiosulfate import ATP-binding protein CysA 2">
    <location>
        <begin position="1"/>
        <end position="366"/>
    </location>
</feature>
<feature type="domain" description="ABC transporter" evidence="1">
    <location>
        <begin position="14"/>
        <end position="243"/>
    </location>
</feature>
<feature type="binding site" evidence="1">
    <location>
        <begin position="46"/>
        <end position="53"/>
    </location>
    <ligand>
        <name>ATP</name>
        <dbReference type="ChEBI" id="CHEBI:30616"/>
    </ligand>
</feature>
<keyword id="KW-0067">ATP-binding</keyword>
<keyword id="KW-0997">Cell inner membrane</keyword>
<keyword id="KW-1003">Cell membrane</keyword>
<keyword id="KW-0472">Membrane</keyword>
<keyword id="KW-0547">Nucleotide-binding</keyword>
<keyword id="KW-1185">Reference proteome</keyword>
<keyword id="KW-0764">Sulfate transport</keyword>
<keyword id="KW-1278">Translocase</keyword>
<keyword id="KW-0813">Transport</keyword>
<dbReference type="EC" id="7.3.2.3" evidence="1"/>
<dbReference type="EMBL" id="AE016825">
    <property type="protein sequence ID" value="AAQ59530.1"/>
    <property type="molecule type" value="Genomic_DNA"/>
</dbReference>
<dbReference type="RefSeq" id="WP_011135408.1">
    <property type="nucleotide sequence ID" value="NC_005085.1"/>
</dbReference>
<dbReference type="SMR" id="Q7NWX3"/>
<dbReference type="STRING" id="243365.CV_1856"/>
<dbReference type="KEGG" id="cvi:CV_1856"/>
<dbReference type="eggNOG" id="COG3842">
    <property type="taxonomic scope" value="Bacteria"/>
</dbReference>
<dbReference type="HOGENOM" id="CLU_000604_1_1_4"/>
<dbReference type="OrthoDB" id="5298774at2"/>
<dbReference type="Proteomes" id="UP000001424">
    <property type="component" value="Chromosome"/>
</dbReference>
<dbReference type="GO" id="GO:0043190">
    <property type="term" value="C:ATP-binding cassette (ABC) transporter complex"/>
    <property type="evidence" value="ECO:0007669"/>
    <property type="project" value="InterPro"/>
</dbReference>
<dbReference type="GO" id="GO:0015419">
    <property type="term" value="F:ABC-type sulfate transporter activity"/>
    <property type="evidence" value="ECO:0007669"/>
    <property type="project" value="RHEA"/>
</dbReference>
<dbReference type="GO" id="GO:0102025">
    <property type="term" value="F:ABC-type thiosulfate transporter activity"/>
    <property type="evidence" value="ECO:0007669"/>
    <property type="project" value="RHEA"/>
</dbReference>
<dbReference type="GO" id="GO:0005524">
    <property type="term" value="F:ATP binding"/>
    <property type="evidence" value="ECO:0007669"/>
    <property type="project" value="UniProtKB-KW"/>
</dbReference>
<dbReference type="GO" id="GO:0016887">
    <property type="term" value="F:ATP hydrolysis activity"/>
    <property type="evidence" value="ECO:0007669"/>
    <property type="project" value="InterPro"/>
</dbReference>
<dbReference type="FunFam" id="3.40.50.300:FF:000425">
    <property type="entry name" value="Probable ABC transporter, ATP-binding subunit"/>
    <property type="match status" value="1"/>
</dbReference>
<dbReference type="Gene3D" id="3.40.50.300">
    <property type="entry name" value="P-loop containing nucleotide triphosphate hydrolases"/>
    <property type="match status" value="1"/>
</dbReference>
<dbReference type="InterPro" id="IPR003593">
    <property type="entry name" value="AAA+_ATPase"/>
</dbReference>
<dbReference type="InterPro" id="IPR050093">
    <property type="entry name" value="ABC_SmlMolc_Importer"/>
</dbReference>
<dbReference type="InterPro" id="IPR003439">
    <property type="entry name" value="ABC_transporter-like_ATP-bd"/>
</dbReference>
<dbReference type="InterPro" id="IPR017871">
    <property type="entry name" value="ABC_transporter-like_CS"/>
</dbReference>
<dbReference type="InterPro" id="IPR017666">
    <property type="entry name" value="AminoethylPonate_ABC_PhnT2"/>
</dbReference>
<dbReference type="InterPro" id="IPR008995">
    <property type="entry name" value="Mo/tungstate-bd_C_term_dom"/>
</dbReference>
<dbReference type="InterPro" id="IPR027417">
    <property type="entry name" value="P-loop_NTPase"/>
</dbReference>
<dbReference type="InterPro" id="IPR013611">
    <property type="entry name" value="Transp-assoc_OB_typ2"/>
</dbReference>
<dbReference type="NCBIfam" id="TIGR03265">
    <property type="entry name" value="PhnT2"/>
    <property type="match status" value="1"/>
</dbReference>
<dbReference type="PANTHER" id="PTHR42781:SF5">
    <property type="entry name" value="PUTRESCINE TRANSPORT ATP-BINDING PROTEIN POTG"/>
    <property type="match status" value="1"/>
</dbReference>
<dbReference type="PANTHER" id="PTHR42781">
    <property type="entry name" value="SPERMIDINE/PUTRESCINE IMPORT ATP-BINDING PROTEIN POTA"/>
    <property type="match status" value="1"/>
</dbReference>
<dbReference type="Pfam" id="PF00005">
    <property type="entry name" value="ABC_tran"/>
    <property type="match status" value="1"/>
</dbReference>
<dbReference type="Pfam" id="PF08402">
    <property type="entry name" value="TOBE_2"/>
    <property type="match status" value="1"/>
</dbReference>
<dbReference type="SMART" id="SM00382">
    <property type="entry name" value="AAA"/>
    <property type="match status" value="1"/>
</dbReference>
<dbReference type="SUPFAM" id="SSF50331">
    <property type="entry name" value="MOP-like"/>
    <property type="match status" value="1"/>
</dbReference>
<dbReference type="SUPFAM" id="SSF52540">
    <property type="entry name" value="P-loop containing nucleoside triphosphate hydrolases"/>
    <property type="match status" value="1"/>
</dbReference>
<dbReference type="PROSITE" id="PS00211">
    <property type="entry name" value="ABC_TRANSPORTER_1"/>
    <property type="match status" value="1"/>
</dbReference>
<dbReference type="PROSITE" id="PS50893">
    <property type="entry name" value="ABC_TRANSPORTER_2"/>
    <property type="match status" value="1"/>
</dbReference>
<dbReference type="PROSITE" id="PS51237">
    <property type="entry name" value="CYSA"/>
    <property type="match status" value="1"/>
</dbReference>
<sequence>MKPVDSLSGLSEHLSVHALCRRFGAFTALDQASLSIRKGEFVCLLGPSGCGKTTLLRLIAGLDLPDAGAIRLSGRDITRTAPAKRDYGIVFQSYALFPNLTVADNIAYGLTPRRDKAGHAHRVRELLDMVGLPGSEGKYPSQLSGGQQQRVALARALATSPGLLLLDEPLSALDARVRDKLREELKGLQRRLGVTTMMVTHDQEEALSIADRVVVMNAGRIEQTGTPAEIYRSPASRFVAEFVGDANWLPAERRGGREAAVGGCVLSLARDLPDAEALTLFIRPEDVIVKPRWAPAANTLLARVEDVSFGGAMTRLRLRPEGMPGLILRAEICPSMLNRQPLVPGEIVPVELPAAQLRAYPGEAAC</sequence>
<accession>Q7NWX3</accession>
<protein>
    <recommendedName>
        <fullName evidence="1">Sulfate/thiosulfate import ATP-binding protein CysA 2</fullName>
        <ecNumber evidence="1">7.3.2.3</ecNumber>
    </recommendedName>
    <alternativeName>
        <fullName evidence="1">Sulfate-transporting ATPase 2</fullName>
    </alternativeName>
</protein>
<reference key="1">
    <citation type="journal article" date="2003" name="Proc. Natl. Acad. Sci. U.S.A.">
        <title>The complete genome sequence of Chromobacterium violaceum reveals remarkable and exploitable bacterial adaptability.</title>
        <authorList>
            <person name="Vasconcelos A.T.R."/>
            <person name="de Almeida D.F."/>
            <person name="Hungria M."/>
            <person name="Guimaraes C.T."/>
            <person name="Antonio R.V."/>
            <person name="Almeida F.C."/>
            <person name="de Almeida L.G.P."/>
            <person name="de Almeida R."/>
            <person name="Alves-Gomes J.A."/>
            <person name="Andrade E.M."/>
            <person name="Araripe J."/>
            <person name="de Araujo M.F.F."/>
            <person name="Astolfi-Filho S."/>
            <person name="Azevedo V."/>
            <person name="Baptista A.J."/>
            <person name="Bataus L.A.M."/>
            <person name="Batista J.S."/>
            <person name="Belo A."/>
            <person name="van den Berg C."/>
            <person name="Bogo M."/>
            <person name="Bonatto S."/>
            <person name="Bordignon J."/>
            <person name="Brigido M.M."/>
            <person name="Brito C.A."/>
            <person name="Brocchi M."/>
            <person name="Burity H.A."/>
            <person name="Camargo A.A."/>
            <person name="Cardoso D.D.P."/>
            <person name="Carneiro N.P."/>
            <person name="Carraro D.M."/>
            <person name="Carvalho C.M.B."/>
            <person name="Cascardo J.C.M."/>
            <person name="Cavada B.S."/>
            <person name="Chueire L.M.O."/>
            <person name="Creczynski-Pasa T.B."/>
            <person name="Cunha-Junior N.C."/>
            <person name="Fagundes N."/>
            <person name="Falcao C.L."/>
            <person name="Fantinatti F."/>
            <person name="Farias I.P."/>
            <person name="Felipe M.S.S."/>
            <person name="Ferrari L.P."/>
            <person name="Ferro J.A."/>
            <person name="Ferro M.I.T."/>
            <person name="Franco G.R."/>
            <person name="Freitas N.S.A."/>
            <person name="Furlan L.R."/>
            <person name="Gazzinelli R.T."/>
            <person name="Gomes E.A."/>
            <person name="Goncalves P.R."/>
            <person name="Grangeiro T.B."/>
            <person name="Grattapaglia D."/>
            <person name="Grisard E.C."/>
            <person name="Hanna E.S."/>
            <person name="Jardim S.N."/>
            <person name="Laurino J."/>
            <person name="Leoi L.C.T."/>
            <person name="Lima L.F.A."/>
            <person name="Loureiro M.F."/>
            <person name="Lyra M.C.C.P."/>
            <person name="Madeira H.M.F."/>
            <person name="Manfio G.P."/>
            <person name="Maranhao A.Q."/>
            <person name="Martins W.S."/>
            <person name="di Mauro S.M.Z."/>
            <person name="de Medeiros S.R.B."/>
            <person name="Meissner R.V."/>
            <person name="Moreira M.A.M."/>
            <person name="Nascimento F.F."/>
            <person name="Nicolas M.F."/>
            <person name="Oliveira J.G."/>
            <person name="Oliveira S.C."/>
            <person name="Paixao R.F.C."/>
            <person name="Parente J.A."/>
            <person name="Pedrosa F.O."/>
            <person name="Pena S.D.J."/>
            <person name="Pereira J.O."/>
            <person name="Pereira M."/>
            <person name="Pinto L.S.R.C."/>
            <person name="Pinto L.S."/>
            <person name="Porto J.I.R."/>
            <person name="Potrich D.P."/>
            <person name="Ramalho-Neto C.E."/>
            <person name="Reis A.M.M."/>
            <person name="Rigo L.U."/>
            <person name="Rondinelli E."/>
            <person name="Santos E.B.P."/>
            <person name="Santos F.R."/>
            <person name="Schneider M.P.C."/>
            <person name="Seuanez H.N."/>
            <person name="Silva A.M.R."/>
            <person name="da Silva A.L.C."/>
            <person name="Silva D.W."/>
            <person name="Silva R."/>
            <person name="Simoes I.C."/>
            <person name="Simon D."/>
            <person name="Soares C.M.A."/>
            <person name="Soares R.B.A."/>
            <person name="Souza E.M."/>
            <person name="Souza K.R.L."/>
            <person name="Souza R.C."/>
            <person name="Steffens M.B.R."/>
            <person name="Steindel M."/>
            <person name="Teixeira S.R."/>
            <person name="Urmenyi T."/>
            <person name="Vettore A."/>
            <person name="Wassem R."/>
            <person name="Zaha A."/>
            <person name="Simpson A.J.G."/>
        </authorList>
    </citation>
    <scope>NUCLEOTIDE SEQUENCE [LARGE SCALE GENOMIC DNA]</scope>
    <source>
        <strain>ATCC 12472 / DSM 30191 / JCM 1249 / CCUG 213 / NBRC 12614 / NCIMB 9131 / NCTC 9757 / MK</strain>
    </source>
</reference>
<proteinExistence type="inferred from homology"/>
<name>CYSA2_CHRVO</name>